<dbReference type="EC" id="3.1.4.12" evidence="1"/>
<dbReference type="EMBL" id="AE000516">
    <property type="protein sequence ID" value="AAK45157.1"/>
    <property type="status" value="ALT_INIT"/>
    <property type="molecule type" value="Genomic_DNA"/>
</dbReference>
<dbReference type="PIR" id="E70781">
    <property type="entry name" value="E70781"/>
</dbReference>
<dbReference type="RefSeq" id="WP_003901038.1">
    <property type="nucleotide sequence ID" value="NZ_KK341227.1"/>
</dbReference>
<dbReference type="SMR" id="P9WKQ0"/>
<dbReference type="GeneID" id="45424852"/>
<dbReference type="KEGG" id="mtc:MT0911"/>
<dbReference type="PATRIC" id="fig|83331.31.peg.980"/>
<dbReference type="HOGENOM" id="CLU_622305_0_0_11"/>
<dbReference type="Proteomes" id="UP000001020">
    <property type="component" value="Chromosome"/>
</dbReference>
<dbReference type="GO" id="GO:0009279">
    <property type="term" value="C:cell outer membrane"/>
    <property type="evidence" value="ECO:0007669"/>
    <property type="project" value="UniProtKB-SubCell"/>
</dbReference>
<dbReference type="GO" id="GO:0046930">
    <property type="term" value="C:pore complex"/>
    <property type="evidence" value="ECO:0007669"/>
    <property type="project" value="UniProtKB-KW"/>
</dbReference>
<dbReference type="GO" id="GO:0015288">
    <property type="term" value="F:porin activity"/>
    <property type="evidence" value="ECO:0007669"/>
    <property type="project" value="UniProtKB-KW"/>
</dbReference>
<dbReference type="GO" id="GO:0004767">
    <property type="term" value="F:sphingomyelin phosphodiesterase activity"/>
    <property type="evidence" value="ECO:0007669"/>
    <property type="project" value="UniProtKB-EC"/>
</dbReference>
<dbReference type="GO" id="GO:0031640">
    <property type="term" value="P:killing of cells of another organism"/>
    <property type="evidence" value="ECO:0007669"/>
    <property type="project" value="UniProtKB-KW"/>
</dbReference>
<dbReference type="GO" id="GO:0016042">
    <property type="term" value="P:lipid catabolic process"/>
    <property type="evidence" value="ECO:0007669"/>
    <property type="project" value="UniProtKB-KW"/>
</dbReference>
<dbReference type="GO" id="GO:0006811">
    <property type="term" value="P:monoatomic ion transport"/>
    <property type="evidence" value="ECO:0007669"/>
    <property type="project" value="UniProtKB-KW"/>
</dbReference>
<dbReference type="Gene3D" id="2.60.40.3440">
    <property type="match status" value="1"/>
</dbReference>
<dbReference type="Gene3D" id="3.60.10.10">
    <property type="entry name" value="Endonuclease/exonuclease/phosphatase"/>
    <property type="match status" value="1"/>
</dbReference>
<dbReference type="InterPro" id="IPR036691">
    <property type="entry name" value="Endo/exonu/phosph_ase_sf"/>
</dbReference>
<dbReference type="InterPro" id="IPR005135">
    <property type="entry name" value="Endo/exonuclease/phosphatase"/>
</dbReference>
<dbReference type="Pfam" id="PF17963">
    <property type="entry name" value="Big_9"/>
    <property type="match status" value="1"/>
</dbReference>
<dbReference type="Pfam" id="PF03372">
    <property type="entry name" value="Exo_endo_phos"/>
    <property type="match status" value="1"/>
</dbReference>
<dbReference type="SUPFAM" id="SSF56219">
    <property type="entry name" value="DNase I-like"/>
    <property type="match status" value="1"/>
</dbReference>
<comment type="function">
    <text evidence="1">Catalyzes the cleavage of sphingomyelin, a major lipid in eukaryotic cells, into ceramide and phosphocholine, which are then utilized by M.tuberculosis as carbon, nitrogen and phosphorus sources, respectively. Thus, enables M.tuberculosis to utilize sphingomyelin as a source of several essential nutrients for intracellular growth during infection. Furthermore, lyses erythrocytes and constitutes the main hemolytic factor of M.tuberculosis.</text>
</comment>
<comment type="catalytic activity">
    <reaction evidence="1">
        <text>a sphingomyelin + H2O = phosphocholine + an N-acylsphing-4-enine + H(+)</text>
        <dbReference type="Rhea" id="RHEA:19253"/>
        <dbReference type="ChEBI" id="CHEBI:15377"/>
        <dbReference type="ChEBI" id="CHEBI:15378"/>
        <dbReference type="ChEBI" id="CHEBI:17636"/>
        <dbReference type="ChEBI" id="CHEBI:52639"/>
        <dbReference type="ChEBI" id="CHEBI:295975"/>
        <dbReference type="EC" id="3.1.4.12"/>
    </reaction>
</comment>
<comment type="subcellular location">
    <subcellularLocation>
        <location evidence="1">Cell outer membrane</location>
        <topology evidence="1">Multi-pass membrane protein</topology>
    </subcellularLocation>
</comment>
<comment type="domain">
    <text evidence="1">Consists of a surface-exposed C-terminal sphingomyelinase domain and a putative outer membrane-spanning N-terminal channel domain able to mediate glucose and phosphocholine uptake across the outer membrane.</text>
</comment>
<comment type="similarity">
    <text evidence="4">Belongs to the SpmT family.</text>
</comment>
<comment type="sequence caution" evidence="4">
    <conflict type="erroneous initiation">
        <sequence resource="EMBL-CDS" id="AAK45157"/>
    </conflict>
    <text>Extended N-terminus.</text>
</comment>
<sequence length="490" mass="52034">MDYAKRIGQVGALAVVLGVGAAVTTHAIGSAAPTDPSSSSTDSPVDACSPLGGSASSLAAIPGASVPQVGVRQVDPGSIPDDLLNALIDFLAAVRNGLVPIIENRTPVANPQQVSVPEGGTVGPVRFDACDPDGNRMTFAVRERGAPGGPQHGIVTVDQRTASFIYTADPGFVGTDTFSVNVSDDTSLHVHGLAGYLGPFHGHDDVATVTVFVGNTPTDTISGDFSMLTYNIAGLPFPLSSAILPRFFYTKEIGKRLNAYYVANVQEDFAYHQFLIKKSKMPSQTPPEPPTLLWPIGVPFSDGLNTLSEFKVQRLDRQTWYECTSDNCLTLKGFTYSQMRLPGGDTVDVYNLHTNTGGGPTTNANLAQVANYIQQNSAGRAVIVTGDFNARYSDDQSALLQFAQVNGLTDAWVQVEHGPTTPPFAPTCMVGNECELLDKIFYRSGQGVTLQAVSYGNEAPKFFNSKGEPLSDHSPAVVGFHYVADNVAVR</sequence>
<organism>
    <name type="scientific">Mycobacterium tuberculosis (strain CDC 1551 / Oshkosh)</name>
    <dbReference type="NCBI Taxonomy" id="83331"/>
    <lineage>
        <taxon>Bacteria</taxon>
        <taxon>Bacillati</taxon>
        <taxon>Actinomycetota</taxon>
        <taxon>Actinomycetes</taxon>
        <taxon>Mycobacteriales</taxon>
        <taxon>Mycobacteriaceae</taxon>
        <taxon>Mycobacterium</taxon>
        <taxon>Mycobacterium tuberculosis complex</taxon>
    </lineage>
</organism>
<gene>
    <name evidence="1" type="primary">spmT</name>
    <name type="ordered locus">MT0911</name>
</gene>
<keyword id="KW-0998">Cell outer membrane</keyword>
<keyword id="KW-0204">Cytolysis</keyword>
<keyword id="KW-0354">Hemolysis</keyword>
<keyword id="KW-0378">Hydrolase</keyword>
<keyword id="KW-0406">Ion transport</keyword>
<keyword id="KW-0442">Lipid degradation</keyword>
<keyword id="KW-0443">Lipid metabolism</keyword>
<keyword id="KW-0472">Membrane</keyword>
<keyword id="KW-0626">Porin</keyword>
<keyword id="KW-1185">Reference proteome</keyword>
<keyword id="KW-0732">Signal</keyword>
<keyword id="KW-0812">Transmembrane</keyword>
<keyword id="KW-1134">Transmembrane beta strand</keyword>
<keyword id="KW-1133">Transmembrane helix</keyword>
<keyword id="KW-0813">Transport</keyword>
<evidence type="ECO:0000250" key="1">
    <source>
        <dbReference type="UniProtKB" id="P9WKQ1"/>
    </source>
</evidence>
<evidence type="ECO:0000255" key="2"/>
<evidence type="ECO:0000256" key="3">
    <source>
        <dbReference type="SAM" id="MobiDB-lite"/>
    </source>
</evidence>
<evidence type="ECO:0000305" key="4"/>
<name>SMASE_MYCTO</name>
<accession>P9WKQ0</accession>
<accession>L0T574</accession>
<accession>P64743</accession>
<accession>Q10549</accession>
<proteinExistence type="inferred from homology"/>
<feature type="signal peptide" evidence="2">
    <location>
        <begin position="1"/>
        <end position="31"/>
    </location>
</feature>
<feature type="chain" id="PRO_0000427615" description="Sphingomyelinase">
    <location>
        <begin position="32"/>
        <end position="490"/>
    </location>
</feature>
<feature type="topological domain" description="Periplasmic" evidence="1">
    <location>
        <begin position="32"/>
        <end position="136"/>
    </location>
</feature>
<feature type="transmembrane region" description="Beta stranded" evidence="1">
    <location>
        <begin position="137"/>
        <end position="145"/>
    </location>
</feature>
<feature type="topological domain" description="Extracellular" evidence="1">
    <location>
        <begin position="146"/>
        <end position="161"/>
    </location>
</feature>
<feature type="transmembrane region" description="Beta stranded" evidence="1">
    <location>
        <begin position="162"/>
        <end position="168"/>
    </location>
</feature>
<feature type="topological domain" description="Periplasmic" evidence="1">
    <location>
        <begin position="169"/>
        <end position="171"/>
    </location>
</feature>
<feature type="transmembrane region" description="Beta stranded" evidence="1">
    <location>
        <begin position="172"/>
        <end position="182"/>
    </location>
</feature>
<feature type="topological domain" description="Extracellular" evidence="1">
    <location>
        <begin position="183"/>
        <end position="187"/>
    </location>
</feature>
<feature type="transmembrane region" description="Beta stranded" evidence="1">
    <location>
        <begin position="188"/>
        <end position="196"/>
    </location>
</feature>
<feature type="topological domain" description="Periplasmic" evidence="1">
    <location>
        <begin position="197"/>
        <end position="204"/>
    </location>
</feature>
<feature type="transmembrane region" description="Beta stranded" evidence="1">
    <location>
        <begin position="205"/>
        <end position="213"/>
    </location>
</feature>
<feature type="topological domain" description="Extracellular" evidence="1">
    <location>
        <begin position="214"/>
        <end position="490"/>
    </location>
</feature>
<feature type="region of interest" description="Disordered" evidence="3">
    <location>
        <begin position="30"/>
        <end position="49"/>
    </location>
</feature>
<protein>
    <recommendedName>
        <fullName evidence="1">Sphingomyelinase</fullName>
        <shortName evidence="1">SMase</shortName>
        <ecNumber evidence="1">3.1.4.12</ecNumber>
    </recommendedName>
</protein>
<reference key="1">
    <citation type="journal article" date="2002" name="J. Bacteriol.">
        <title>Whole-genome comparison of Mycobacterium tuberculosis clinical and laboratory strains.</title>
        <authorList>
            <person name="Fleischmann R.D."/>
            <person name="Alland D."/>
            <person name="Eisen J.A."/>
            <person name="Carpenter L."/>
            <person name="White O."/>
            <person name="Peterson J.D."/>
            <person name="DeBoy R.T."/>
            <person name="Dodson R.J."/>
            <person name="Gwinn M.L."/>
            <person name="Haft D.H."/>
            <person name="Hickey E.K."/>
            <person name="Kolonay J.F."/>
            <person name="Nelson W.C."/>
            <person name="Umayam L.A."/>
            <person name="Ermolaeva M.D."/>
            <person name="Salzberg S.L."/>
            <person name="Delcher A."/>
            <person name="Utterback T.R."/>
            <person name="Weidman J.F."/>
            <person name="Khouri H.M."/>
            <person name="Gill J."/>
            <person name="Mikula A."/>
            <person name="Bishai W."/>
            <person name="Jacobs W.R. Jr."/>
            <person name="Venter J.C."/>
            <person name="Fraser C.M."/>
        </authorList>
    </citation>
    <scope>NUCLEOTIDE SEQUENCE [LARGE SCALE GENOMIC DNA]</scope>
    <source>
        <strain>CDC 1551 / Oshkosh</strain>
    </source>
</reference>